<proteinExistence type="inferred from homology"/>
<organism>
    <name type="scientific">Dictyoglomus turgidum (strain DSM 6724 / Z-1310)</name>
    <dbReference type="NCBI Taxonomy" id="515635"/>
    <lineage>
        <taxon>Bacteria</taxon>
        <taxon>Pseudomonadati</taxon>
        <taxon>Dictyoglomota</taxon>
        <taxon>Dictyoglomia</taxon>
        <taxon>Dictyoglomales</taxon>
        <taxon>Dictyoglomaceae</taxon>
        <taxon>Dictyoglomus</taxon>
    </lineage>
</organism>
<protein>
    <recommendedName>
        <fullName evidence="1">Large ribosomal subunit protein bL35</fullName>
    </recommendedName>
    <alternativeName>
        <fullName evidence="3">50S ribosomal protein L35</fullName>
    </alternativeName>
</protein>
<sequence>MSKLKTRSSAAKRFKVTATGKILHKKAGKRHNLSKKSESRKRRLDIPGEIKSVDRWKVERMLPYNL</sequence>
<dbReference type="EMBL" id="CP001251">
    <property type="protein sequence ID" value="ACK42587.1"/>
    <property type="molecule type" value="Genomic_DNA"/>
</dbReference>
<dbReference type="RefSeq" id="WP_012583669.1">
    <property type="nucleotide sequence ID" value="NC_011661.1"/>
</dbReference>
<dbReference type="RefSeq" id="YP_002353201.1">
    <property type="nucleotide sequence ID" value="NC_011661.1"/>
</dbReference>
<dbReference type="SMR" id="B8E0E2"/>
<dbReference type="FunCoup" id="B8E0E2">
    <property type="interactions" value="298"/>
</dbReference>
<dbReference type="STRING" id="515635.Dtur_1313"/>
<dbReference type="EnsemblBacteria" id="ACK42587">
    <property type="protein sequence ID" value="ACK42587"/>
    <property type="gene ID" value="Dtur_1313"/>
</dbReference>
<dbReference type="KEGG" id="dtu:Dtur_1313"/>
<dbReference type="PATRIC" id="fig|515635.4.peg.1358"/>
<dbReference type="eggNOG" id="COG0291">
    <property type="taxonomic scope" value="Bacteria"/>
</dbReference>
<dbReference type="HOGENOM" id="CLU_169643_4_3_0"/>
<dbReference type="InParanoid" id="B8E0E2"/>
<dbReference type="OrthoDB" id="47476at2"/>
<dbReference type="Proteomes" id="UP000007719">
    <property type="component" value="Chromosome"/>
</dbReference>
<dbReference type="GO" id="GO:0022625">
    <property type="term" value="C:cytosolic large ribosomal subunit"/>
    <property type="evidence" value="ECO:0000318"/>
    <property type="project" value="GO_Central"/>
</dbReference>
<dbReference type="GO" id="GO:0003735">
    <property type="term" value="F:structural constituent of ribosome"/>
    <property type="evidence" value="ECO:0000318"/>
    <property type="project" value="GO_Central"/>
</dbReference>
<dbReference type="GO" id="GO:0006412">
    <property type="term" value="P:translation"/>
    <property type="evidence" value="ECO:0007669"/>
    <property type="project" value="UniProtKB-UniRule"/>
</dbReference>
<dbReference type="FunFam" id="4.10.410.60:FF:000001">
    <property type="entry name" value="50S ribosomal protein L35"/>
    <property type="match status" value="1"/>
</dbReference>
<dbReference type="Gene3D" id="4.10.410.60">
    <property type="match status" value="1"/>
</dbReference>
<dbReference type="HAMAP" id="MF_00514">
    <property type="entry name" value="Ribosomal_bL35"/>
    <property type="match status" value="1"/>
</dbReference>
<dbReference type="InterPro" id="IPR001706">
    <property type="entry name" value="Ribosomal_bL35"/>
</dbReference>
<dbReference type="InterPro" id="IPR021137">
    <property type="entry name" value="Ribosomal_bL35-like"/>
</dbReference>
<dbReference type="InterPro" id="IPR018265">
    <property type="entry name" value="Ribosomal_bL35_CS"/>
</dbReference>
<dbReference type="InterPro" id="IPR037229">
    <property type="entry name" value="Ribosomal_bL35_sf"/>
</dbReference>
<dbReference type="NCBIfam" id="TIGR00001">
    <property type="entry name" value="rpmI_bact"/>
    <property type="match status" value="1"/>
</dbReference>
<dbReference type="PANTHER" id="PTHR33343">
    <property type="entry name" value="54S RIBOSOMAL PROTEIN BL35M"/>
    <property type="match status" value="1"/>
</dbReference>
<dbReference type="PANTHER" id="PTHR33343:SF1">
    <property type="entry name" value="LARGE RIBOSOMAL SUBUNIT PROTEIN BL35M"/>
    <property type="match status" value="1"/>
</dbReference>
<dbReference type="Pfam" id="PF01632">
    <property type="entry name" value="Ribosomal_L35p"/>
    <property type="match status" value="1"/>
</dbReference>
<dbReference type="PRINTS" id="PR00064">
    <property type="entry name" value="RIBOSOMALL35"/>
</dbReference>
<dbReference type="SUPFAM" id="SSF143034">
    <property type="entry name" value="L35p-like"/>
    <property type="match status" value="1"/>
</dbReference>
<dbReference type="PROSITE" id="PS00936">
    <property type="entry name" value="RIBOSOMAL_L35"/>
    <property type="match status" value="1"/>
</dbReference>
<comment type="similarity">
    <text evidence="1">Belongs to the bacterial ribosomal protein bL35 family.</text>
</comment>
<gene>
    <name evidence="1" type="primary">rpmI</name>
    <name type="ordered locus">Dtur_1313</name>
</gene>
<feature type="chain" id="PRO_1000127342" description="Large ribosomal subunit protein bL35">
    <location>
        <begin position="1"/>
        <end position="66"/>
    </location>
</feature>
<feature type="region of interest" description="Disordered" evidence="2">
    <location>
        <begin position="1"/>
        <end position="43"/>
    </location>
</feature>
<feature type="compositionally biased region" description="Basic residues" evidence="2">
    <location>
        <begin position="1"/>
        <end position="15"/>
    </location>
</feature>
<feature type="compositionally biased region" description="Basic residues" evidence="2">
    <location>
        <begin position="22"/>
        <end position="43"/>
    </location>
</feature>
<evidence type="ECO:0000255" key="1">
    <source>
        <dbReference type="HAMAP-Rule" id="MF_00514"/>
    </source>
</evidence>
<evidence type="ECO:0000256" key="2">
    <source>
        <dbReference type="SAM" id="MobiDB-lite"/>
    </source>
</evidence>
<evidence type="ECO:0000305" key="3"/>
<name>RL35_DICTD</name>
<reference key="1">
    <citation type="journal article" date="2016" name="Front. Microbiol.">
        <title>The complete genome sequence of hyperthermophile Dictyoglomus turgidum DSM 6724 reveals a specialized carbohydrate fermentor.</title>
        <authorList>
            <person name="Brumm P.J."/>
            <person name="Gowda K."/>
            <person name="Robb F.T."/>
            <person name="Mead D.A."/>
        </authorList>
    </citation>
    <scope>NUCLEOTIDE SEQUENCE [LARGE SCALE GENOMIC DNA]</scope>
    <source>
        <strain>DSM 6724 / Z-1310</strain>
    </source>
</reference>
<keyword id="KW-1185">Reference proteome</keyword>
<keyword id="KW-0687">Ribonucleoprotein</keyword>
<keyword id="KW-0689">Ribosomal protein</keyword>
<accession>B8E0E2</accession>